<organism>
    <name type="scientific">Vibrio vulnificus (strain CMCP6)</name>
    <dbReference type="NCBI Taxonomy" id="216895"/>
    <lineage>
        <taxon>Bacteria</taxon>
        <taxon>Pseudomonadati</taxon>
        <taxon>Pseudomonadota</taxon>
        <taxon>Gammaproteobacteria</taxon>
        <taxon>Vibrionales</taxon>
        <taxon>Vibrionaceae</taxon>
        <taxon>Vibrio</taxon>
    </lineage>
</organism>
<feature type="chain" id="PRO_0000099994" description="Ribosomal large subunit pseudouridine synthase B">
    <location>
        <begin position="1"/>
        <end position="320"/>
    </location>
</feature>
<feature type="domain" description="S4 RNA-binding" evidence="2">
    <location>
        <begin position="3"/>
        <end position="68"/>
    </location>
</feature>
<feature type="region of interest" description="Disordered" evidence="3">
    <location>
        <begin position="254"/>
        <end position="320"/>
    </location>
</feature>
<feature type="compositionally biased region" description="Basic residues" evidence="3">
    <location>
        <begin position="259"/>
        <end position="275"/>
    </location>
</feature>
<feature type="compositionally biased region" description="Polar residues" evidence="3">
    <location>
        <begin position="300"/>
        <end position="320"/>
    </location>
</feature>
<feature type="active site" description="Nucleophile" evidence="1">
    <location>
        <position position="109"/>
    </location>
</feature>
<comment type="function">
    <text evidence="1">Responsible for synthesis of pseudouridine from uracil-2605 in 23S ribosomal RNA.</text>
</comment>
<comment type="catalytic activity">
    <reaction>
        <text>uridine(2605) in 23S rRNA = pseudouridine(2605) in 23S rRNA</text>
        <dbReference type="Rhea" id="RHEA:42520"/>
        <dbReference type="Rhea" id="RHEA-COMP:10095"/>
        <dbReference type="Rhea" id="RHEA-COMP:10096"/>
        <dbReference type="ChEBI" id="CHEBI:65314"/>
        <dbReference type="ChEBI" id="CHEBI:65315"/>
        <dbReference type="EC" id="5.4.99.22"/>
    </reaction>
</comment>
<comment type="similarity">
    <text evidence="4">Belongs to the pseudouridine synthase RsuA family.</text>
</comment>
<dbReference type="EC" id="5.4.99.22"/>
<dbReference type="EMBL" id="AE016795">
    <property type="protein sequence ID" value="AAO11384.1"/>
    <property type="molecule type" value="Genomic_DNA"/>
</dbReference>
<dbReference type="RefSeq" id="WP_011080863.1">
    <property type="nucleotide sequence ID" value="NC_004459.3"/>
</dbReference>
<dbReference type="SMR" id="Q8D8C0"/>
<dbReference type="GeneID" id="93894268"/>
<dbReference type="KEGG" id="vvu:VV1_3060"/>
<dbReference type="HOGENOM" id="CLU_024979_5_2_6"/>
<dbReference type="Proteomes" id="UP000002275">
    <property type="component" value="Chromosome 1"/>
</dbReference>
<dbReference type="GO" id="GO:0160139">
    <property type="term" value="F:23S rRNA pseudouridine(2605) synthase activity"/>
    <property type="evidence" value="ECO:0007669"/>
    <property type="project" value="UniProtKB-EC"/>
</dbReference>
<dbReference type="GO" id="GO:0003723">
    <property type="term" value="F:RNA binding"/>
    <property type="evidence" value="ECO:0007669"/>
    <property type="project" value="UniProtKB-KW"/>
</dbReference>
<dbReference type="GO" id="GO:0000455">
    <property type="term" value="P:enzyme-directed rRNA pseudouridine synthesis"/>
    <property type="evidence" value="ECO:0007669"/>
    <property type="project" value="UniProtKB-ARBA"/>
</dbReference>
<dbReference type="CDD" id="cd02556">
    <property type="entry name" value="PseudoU_synth_RluB"/>
    <property type="match status" value="1"/>
</dbReference>
<dbReference type="CDD" id="cd00165">
    <property type="entry name" value="S4"/>
    <property type="match status" value="1"/>
</dbReference>
<dbReference type="FunFam" id="3.10.290.10:FF:000003">
    <property type="entry name" value="Pseudouridine synthase"/>
    <property type="match status" value="1"/>
</dbReference>
<dbReference type="FunFam" id="3.30.2350.10:FF:000002">
    <property type="entry name" value="Pseudouridine synthase"/>
    <property type="match status" value="1"/>
</dbReference>
<dbReference type="FunFam" id="3.30.70.1560:FF:000001">
    <property type="entry name" value="Pseudouridine synthase"/>
    <property type="match status" value="1"/>
</dbReference>
<dbReference type="FunFam" id="3.30.70.580:FF:000009">
    <property type="entry name" value="Pseudouridine synthase"/>
    <property type="match status" value="1"/>
</dbReference>
<dbReference type="Gene3D" id="3.30.2350.10">
    <property type="entry name" value="Pseudouridine synthase"/>
    <property type="match status" value="1"/>
</dbReference>
<dbReference type="Gene3D" id="3.10.290.10">
    <property type="entry name" value="RNA-binding S4 domain"/>
    <property type="match status" value="1"/>
</dbReference>
<dbReference type="InterPro" id="IPR020103">
    <property type="entry name" value="PsdUridine_synth_cat_dom_sf"/>
</dbReference>
<dbReference type="InterPro" id="IPR006145">
    <property type="entry name" value="PsdUridine_synth_RsuA/RluA"/>
</dbReference>
<dbReference type="InterPro" id="IPR000748">
    <property type="entry name" value="PsdUridine_synth_RsuA/RluB/E/F"/>
</dbReference>
<dbReference type="InterPro" id="IPR018496">
    <property type="entry name" value="PsdUridine_synth_RsuA/RluB_CS"/>
</dbReference>
<dbReference type="InterPro" id="IPR050343">
    <property type="entry name" value="RsuA_PseudoU_synthase"/>
</dbReference>
<dbReference type="InterPro" id="IPR002942">
    <property type="entry name" value="S4_RNA-bd"/>
</dbReference>
<dbReference type="InterPro" id="IPR036986">
    <property type="entry name" value="S4_RNA-bd_sf"/>
</dbReference>
<dbReference type="NCBIfam" id="NF007976">
    <property type="entry name" value="PRK10700.1"/>
    <property type="match status" value="1"/>
</dbReference>
<dbReference type="NCBIfam" id="TIGR00093">
    <property type="entry name" value="pseudouridine synthase"/>
    <property type="match status" value="1"/>
</dbReference>
<dbReference type="PANTHER" id="PTHR47683">
    <property type="entry name" value="PSEUDOURIDINE SYNTHASE FAMILY PROTEIN-RELATED"/>
    <property type="match status" value="1"/>
</dbReference>
<dbReference type="PANTHER" id="PTHR47683:SF3">
    <property type="entry name" value="RIBOSOMAL LARGE SUBUNIT PSEUDOURIDINE SYNTHASE B"/>
    <property type="match status" value="1"/>
</dbReference>
<dbReference type="Pfam" id="PF00849">
    <property type="entry name" value="PseudoU_synth_2"/>
    <property type="match status" value="1"/>
</dbReference>
<dbReference type="Pfam" id="PF01479">
    <property type="entry name" value="S4"/>
    <property type="match status" value="1"/>
</dbReference>
<dbReference type="SMART" id="SM00363">
    <property type="entry name" value="S4"/>
    <property type="match status" value="1"/>
</dbReference>
<dbReference type="SUPFAM" id="SSF55174">
    <property type="entry name" value="Alpha-L RNA-binding motif"/>
    <property type="match status" value="1"/>
</dbReference>
<dbReference type="SUPFAM" id="SSF55120">
    <property type="entry name" value="Pseudouridine synthase"/>
    <property type="match status" value="1"/>
</dbReference>
<dbReference type="PROSITE" id="PS01149">
    <property type="entry name" value="PSI_RSU"/>
    <property type="match status" value="1"/>
</dbReference>
<dbReference type="PROSITE" id="PS50889">
    <property type="entry name" value="S4"/>
    <property type="match status" value="1"/>
</dbReference>
<sequence>MNEKLQKVLARAGHGSRRELEALIKSGRVSVNGIVAKLGERLEDEQAVVRIDGHVVSVKAQEEVICRVLAYYKPEGELCTRHDPEGRRTVFDRLPKIRGSRWISVGRLDANTSGLLLFTTDGELANRLMHPSRQVEREYLVRVFGEVNEHKVRNLVNGVELDDGLARFEDVVYTGGEGMNHTFYVVINEGRNREVRRLWESQDCTVSRLKRVRYGDIYLDKKLPRGGWMELELKDVNYLRELVELRPEKETMIELNNSSRKRDRARSQKIRRAVKRHEERVSTPKGRSNNAARRKPSKADGQTNKTNSRNQAGSRSKPQR</sequence>
<proteinExistence type="inferred from homology"/>
<gene>
    <name type="primary">rluB</name>
    <name type="ordered locus">VV1_3060</name>
</gene>
<accession>Q8D8C0</accession>
<evidence type="ECO:0000250" key="1"/>
<evidence type="ECO:0000255" key="2">
    <source>
        <dbReference type="PROSITE-ProRule" id="PRU00182"/>
    </source>
</evidence>
<evidence type="ECO:0000256" key="3">
    <source>
        <dbReference type="SAM" id="MobiDB-lite"/>
    </source>
</evidence>
<evidence type="ECO:0000305" key="4"/>
<keyword id="KW-0413">Isomerase</keyword>
<keyword id="KW-0694">RNA-binding</keyword>
<keyword id="KW-0698">rRNA processing</keyword>
<protein>
    <recommendedName>
        <fullName>Ribosomal large subunit pseudouridine synthase B</fullName>
        <ecNumber>5.4.99.22</ecNumber>
    </recommendedName>
    <alternativeName>
        <fullName>23S rRNA pseudouridine(2605) synthase</fullName>
    </alternativeName>
    <alternativeName>
        <fullName>rRNA pseudouridylate synthase B</fullName>
    </alternativeName>
    <alternativeName>
        <fullName>rRNA-uridine isomerase B</fullName>
    </alternativeName>
</protein>
<name>RLUB_VIBVU</name>
<reference key="1">
    <citation type="submission" date="2002-12" db="EMBL/GenBank/DDBJ databases">
        <title>Complete genome sequence of Vibrio vulnificus CMCP6.</title>
        <authorList>
            <person name="Rhee J.H."/>
            <person name="Kim S.Y."/>
            <person name="Chung S.S."/>
            <person name="Kim J.J."/>
            <person name="Moon Y.H."/>
            <person name="Jeong H."/>
            <person name="Choy H.E."/>
        </authorList>
    </citation>
    <scope>NUCLEOTIDE SEQUENCE [LARGE SCALE GENOMIC DNA]</scope>
    <source>
        <strain>CMCP6</strain>
    </source>
</reference>